<proteinExistence type="inferred from homology"/>
<sequence>MRRAIGVTVLAVVGLLLLPYLLTPLYRTGHPVSTLMIWRKLSGASMSRQWIDFAAMSPALPRSVVASEDAKFCSHHGIDWDSLRDVLDDAEDGEVKRGGSTITQQVAKNLFLWPGRSVIRKALEFPLAMWIDAVLPKQRILEIYLNIAEWGPDGQFGVEAGSRYAFGRSATGLTAREAALMAAILPNPVRRSARKPGPGVRRLAGTYMVRARAAELRSCWRDDRGS</sequence>
<evidence type="ECO:0000255" key="1">
    <source>
        <dbReference type="HAMAP-Rule" id="MF_00766"/>
    </source>
</evidence>
<protein>
    <recommendedName>
        <fullName evidence="1">Biosynthetic peptidoglycan transglycosylase</fullName>
        <ecNumber evidence="1">2.4.99.28</ecNumber>
    </recommendedName>
    <alternativeName>
        <fullName evidence="1">Glycan polymerase</fullName>
    </alternativeName>
    <alternativeName>
        <fullName evidence="1">Peptidoglycan glycosyltransferase MtgA</fullName>
        <shortName evidence="1">PGT</shortName>
    </alternativeName>
</protein>
<accession>Q1QQI5</accession>
<comment type="function">
    <text evidence="1">Peptidoglycan polymerase that catalyzes glycan chain elongation from lipid-linked precursors.</text>
</comment>
<comment type="catalytic activity">
    <reaction evidence="1">
        <text>[GlcNAc-(1-&gt;4)-Mur2Ac(oyl-L-Ala-gamma-D-Glu-L-Lys-D-Ala-D-Ala)](n)-di-trans,octa-cis-undecaprenyl diphosphate + beta-D-GlcNAc-(1-&gt;4)-Mur2Ac(oyl-L-Ala-gamma-D-Glu-L-Lys-D-Ala-D-Ala)-di-trans,octa-cis-undecaprenyl diphosphate = [GlcNAc-(1-&gt;4)-Mur2Ac(oyl-L-Ala-gamma-D-Glu-L-Lys-D-Ala-D-Ala)](n+1)-di-trans,octa-cis-undecaprenyl diphosphate + di-trans,octa-cis-undecaprenyl diphosphate + H(+)</text>
        <dbReference type="Rhea" id="RHEA:23708"/>
        <dbReference type="Rhea" id="RHEA-COMP:9602"/>
        <dbReference type="Rhea" id="RHEA-COMP:9603"/>
        <dbReference type="ChEBI" id="CHEBI:15378"/>
        <dbReference type="ChEBI" id="CHEBI:58405"/>
        <dbReference type="ChEBI" id="CHEBI:60033"/>
        <dbReference type="ChEBI" id="CHEBI:78435"/>
        <dbReference type="EC" id="2.4.99.28"/>
    </reaction>
</comment>
<comment type="pathway">
    <text evidence="1">Cell wall biogenesis; peptidoglycan biosynthesis.</text>
</comment>
<comment type="subcellular location">
    <subcellularLocation>
        <location evidence="1">Cell inner membrane</location>
        <topology evidence="1">Single-pass membrane protein</topology>
    </subcellularLocation>
</comment>
<comment type="similarity">
    <text evidence="1">Belongs to the glycosyltransferase 51 family.</text>
</comment>
<dbReference type="EC" id="2.4.99.28" evidence="1"/>
<dbReference type="EMBL" id="CP000319">
    <property type="protein sequence ID" value="ABE61512.1"/>
    <property type="molecule type" value="Genomic_DNA"/>
</dbReference>
<dbReference type="RefSeq" id="WP_011509216.1">
    <property type="nucleotide sequence ID" value="NC_007964.1"/>
</dbReference>
<dbReference type="SMR" id="Q1QQI5"/>
<dbReference type="STRING" id="323097.Nham_0624"/>
<dbReference type="CAZy" id="GT51">
    <property type="family name" value="Glycosyltransferase Family 51"/>
</dbReference>
<dbReference type="KEGG" id="nha:Nham_0624"/>
<dbReference type="eggNOG" id="COG0744">
    <property type="taxonomic scope" value="Bacteria"/>
</dbReference>
<dbReference type="HOGENOM" id="CLU_006354_1_1_5"/>
<dbReference type="OrthoDB" id="9766909at2"/>
<dbReference type="UniPathway" id="UPA00219"/>
<dbReference type="Proteomes" id="UP000001953">
    <property type="component" value="Chromosome"/>
</dbReference>
<dbReference type="GO" id="GO:0009274">
    <property type="term" value="C:peptidoglycan-based cell wall"/>
    <property type="evidence" value="ECO:0007669"/>
    <property type="project" value="InterPro"/>
</dbReference>
<dbReference type="GO" id="GO:0005886">
    <property type="term" value="C:plasma membrane"/>
    <property type="evidence" value="ECO:0007669"/>
    <property type="project" value="UniProtKB-SubCell"/>
</dbReference>
<dbReference type="GO" id="GO:0016763">
    <property type="term" value="F:pentosyltransferase activity"/>
    <property type="evidence" value="ECO:0007669"/>
    <property type="project" value="InterPro"/>
</dbReference>
<dbReference type="GO" id="GO:0008955">
    <property type="term" value="F:peptidoglycan glycosyltransferase activity"/>
    <property type="evidence" value="ECO:0007669"/>
    <property type="project" value="UniProtKB-UniRule"/>
</dbReference>
<dbReference type="GO" id="GO:0071555">
    <property type="term" value="P:cell wall organization"/>
    <property type="evidence" value="ECO:0007669"/>
    <property type="project" value="UniProtKB-KW"/>
</dbReference>
<dbReference type="GO" id="GO:0009252">
    <property type="term" value="P:peptidoglycan biosynthetic process"/>
    <property type="evidence" value="ECO:0007669"/>
    <property type="project" value="UniProtKB-UniRule"/>
</dbReference>
<dbReference type="GO" id="GO:0008360">
    <property type="term" value="P:regulation of cell shape"/>
    <property type="evidence" value="ECO:0007669"/>
    <property type="project" value="UniProtKB-KW"/>
</dbReference>
<dbReference type="Gene3D" id="1.10.3810.10">
    <property type="entry name" value="Biosynthetic peptidoglycan transglycosylase-like"/>
    <property type="match status" value="1"/>
</dbReference>
<dbReference type="HAMAP" id="MF_00766">
    <property type="entry name" value="PGT_MtgA"/>
    <property type="match status" value="1"/>
</dbReference>
<dbReference type="InterPro" id="IPR001264">
    <property type="entry name" value="Glyco_trans_51"/>
</dbReference>
<dbReference type="InterPro" id="IPR023346">
    <property type="entry name" value="Lysozyme-like_dom_sf"/>
</dbReference>
<dbReference type="InterPro" id="IPR036950">
    <property type="entry name" value="PBP_transglycosylase"/>
</dbReference>
<dbReference type="InterPro" id="IPR011812">
    <property type="entry name" value="Pep_trsgly"/>
</dbReference>
<dbReference type="NCBIfam" id="TIGR02070">
    <property type="entry name" value="mono_pep_trsgly"/>
    <property type="match status" value="1"/>
</dbReference>
<dbReference type="PANTHER" id="PTHR30400:SF0">
    <property type="entry name" value="BIOSYNTHETIC PEPTIDOGLYCAN TRANSGLYCOSYLASE"/>
    <property type="match status" value="1"/>
</dbReference>
<dbReference type="PANTHER" id="PTHR30400">
    <property type="entry name" value="MONOFUNCTIONAL BIOSYNTHETIC PEPTIDOGLYCAN TRANSGLYCOSYLASE"/>
    <property type="match status" value="1"/>
</dbReference>
<dbReference type="Pfam" id="PF00912">
    <property type="entry name" value="Transgly"/>
    <property type="match status" value="1"/>
</dbReference>
<dbReference type="SUPFAM" id="SSF53955">
    <property type="entry name" value="Lysozyme-like"/>
    <property type="match status" value="1"/>
</dbReference>
<organism>
    <name type="scientific">Nitrobacter hamburgensis (strain DSM 10229 / NCIMB 13809 / X14)</name>
    <dbReference type="NCBI Taxonomy" id="323097"/>
    <lineage>
        <taxon>Bacteria</taxon>
        <taxon>Pseudomonadati</taxon>
        <taxon>Pseudomonadota</taxon>
        <taxon>Alphaproteobacteria</taxon>
        <taxon>Hyphomicrobiales</taxon>
        <taxon>Nitrobacteraceae</taxon>
        <taxon>Nitrobacter</taxon>
    </lineage>
</organism>
<feature type="chain" id="PRO_0000257676" description="Biosynthetic peptidoglycan transglycosylase">
    <location>
        <begin position="1"/>
        <end position="226"/>
    </location>
</feature>
<feature type="transmembrane region" description="Helical" evidence="1">
    <location>
        <begin position="5"/>
        <end position="25"/>
    </location>
</feature>
<gene>
    <name evidence="1" type="primary">mtgA</name>
    <name type="ordered locus">Nham_0624</name>
</gene>
<name>MTGA_NITHX</name>
<reference key="1">
    <citation type="submission" date="2006-03" db="EMBL/GenBank/DDBJ databases">
        <title>Complete sequence of chromosome of Nitrobacter hamburgensis X14.</title>
        <authorList>
            <consortium name="US DOE Joint Genome Institute"/>
            <person name="Copeland A."/>
            <person name="Lucas S."/>
            <person name="Lapidus A."/>
            <person name="Barry K."/>
            <person name="Detter J.C."/>
            <person name="Glavina del Rio T."/>
            <person name="Hammon N."/>
            <person name="Israni S."/>
            <person name="Dalin E."/>
            <person name="Tice H."/>
            <person name="Pitluck S."/>
            <person name="Chain P."/>
            <person name="Malfatti S."/>
            <person name="Shin M."/>
            <person name="Vergez L."/>
            <person name="Schmutz J."/>
            <person name="Larimer F."/>
            <person name="Land M."/>
            <person name="Hauser L."/>
            <person name="Kyrpides N."/>
            <person name="Ivanova N."/>
            <person name="Ward B."/>
            <person name="Arp D."/>
            <person name="Klotz M."/>
            <person name="Stein L."/>
            <person name="O'Mullan G."/>
            <person name="Starkenburg S."/>
            <person name="Sayavedra L."/>
            <person name="Poret-Peterson A.T."/>
            <person name="Gentry M.E."/>
            <person name="Bruce D."/>
            <person name="Richardson P."/>
        </authorList>
    </citation>
    <scope>NUCLEOTIDE SEQUENCE [LARGE SCALE GENOMIC DNA]</scope>
    <source>
        <strain>DSM 10229 / NCIMB 13809 / X14</strain>
    </source>
</reference>
<keyword id="KW-0997">Cell inner membrane</keyword>
<keyword id="KW-1003">Cell membrane</keyword>
<keyword id="KW-0133">Cell shape</keyword>
<keyword id="KW-0961">Cell wall biogenesis/degradation</keyword>
<keyword id="KW-0328">Glycosyltransferase</keyword>
<keyword id="KW-0472">Membrane</keyword>
<keyword id="KW-0573">Peptidoglycan synthesis</keyword>
<keyword id="KW-1185">Reference proteome</keyword>
<keyword id="KW-0808">Transferase</keyword>
<keyword id="KW-0812">Transmembrane</keyword>
<keyword id="KW-1133">Transmembrane helix</keyword>